<dbReference type="EC" id="2.4.1.-"/>
<dbReference type="EC" id="2.4.1.274" evidence="7"/>
<dbReference type="EMBL" id="AB004550">
    <property type="protein sequence ID" value="BAA25006.1"/>
    <property type="molecule type" value="mRNA"/>
</dbReference>
<dbReference type="EMBL" id="AF038663">
    <property type="protein sequence ID" value="AAC39736.1"/>
    <property type="molecule type" value="mRNA"/>
</dbReference>
<dbReference type="EMBL" id="AL035683">
    <property type="status" value="NOT_ANNOTATED_CDS"/>
    <property type="molecule type" value="Genomic_DNA"/>
</dbReference>
<dbReference type="EMBL" id="AL162615">
    <property type="status" value="NOT_ANNOTATED_CDS"/>
    <property type="molecule type" value="Genomic_DNA"/>
</dbReference>
<dbReference type="EMBL" id="CH471077">
    <property type="protein sequence ID" value="EAW75653.1"/>
    <property type="molecule type" value="Genomic_DNA"/>
</dbReference>
<dbReference type="EMBL" id="CH471077">
    <property type="protein sequence ID" value="EAW75654.1"/>
    <property type="molecule type" value="Genomic_DNA"/>
</dbReference>
<dbReference type="EMBL" id="BC074821">
    <property type="protein sequence ID" value="AAH74821.1"/>
    <property type="molecule type" value="mRNA"/>
</dbReference>
<dbReference type="EMBL" id="BC074873">
    <property type="protein sequence ID" value="AAH74873.1"/>
    <property type="molecule type" value="mRNA"/>
</dbReference>
<dbReference type="EMBL" id="BC104987">
    <property type="protein sequence ID" value="AAI04988.1"/>
    <property type="molecule type" value="mRNA"/>
</dbReference>
<dbReference type="EMBL" id="BC112265">
    <property type="protein sequence ID" value="AAI12266.1"/>
    <property type="molecule type" value="mRNA"/>
</dbReference>
<dbReference type="EMBL" id="AB871482">
    <property type="protein sequence ID" value="BAO04294.2"/>
    <property type="molecule type" value="mRNA"/>
</dbReference>
<dbReference type="CCDS" id="CCDS13420.1"/>
<dbReference type="RefSeq" id="NP_004767.1">
    <property type="nucleotide sequence ID" value="NM_004776.4"/>
</dbReference>
<dbReference type="SMR" id="O43286"/>
<dbReference type="BioGRID" id="114743">
    <property type="interactions" value="118"/>
</dbReference>
<dbReference type="FunCoup" id="O43286">
    <property type="interactions" value="797"/>
</dbReference>
<dbReference type="IntAct" id="O43286">
    <property type="interactions" value="51"/>
</dbReference>
<dbReference type="STRING" id="9606.ENSP00000360776"/>
<dbReference type="CAZy" id="GT7">
    <property type="family name" value="Glycosyltransferase Family 7"/>
</dbReference>
<dbReference type="GlyCosmos" id="O43286">
    <property type="glycosylation" value="7 sites, No reported glycans"/>
</dbReference>
<dbReference type="GlyGen" id="O43286">
    <property type="glycosylation" value="11 sites, 1 N-linked glycan (1 site), 1 O-linked glycan (3 sites)"/>
</dbReference>
<dbReference type="iPTMnet" id="O43286"/>
<dbReference type="PhosphoSitePlus" id="O43286"/>
<dbReference type="SwissPalm" id="O43286"/>
<dbReference type="BioMuta" id="B4GALT5"/>
<dbReference type="jPOST" id="O43286"/>
<dbReference type="MassIVE" id="O43286"/>
<dbReference type="PaxDb" id="9606-ENSP00000360776"/>
<dbReference type="PeptideAtlas" id="O43286"/>
<dbReference type="ProteomicsDB" id="48857"/>
<dbReference type="Pumba" id="O43286"/>
<dbReference type="Antibodypedia" id="28497">
    <property type="antibodies" value="173 antibodies from 27 providers"/>
</dbReference>
<dbReference type="DNASU" id="9334"/>
<dbReference type="Ensembl" id="ENST00000371711.4">
    <property type="protein sequence ID" value="ENSP00000360776.4"/>
    <property type="gene ID" value="ENSG00000158470.5"/>
</dbReference>
<dbReference type="GeneID" id="9334"/>
<dbReference type="KEGG" id="hsa:9334"/>
<dbReference type="MANE-Select" id="ENST00000371711.4">
    <property type="protein sequence ID" value="ENSP00000360776.4"/>
    <property type="RefSeq nucleotide sequence ID" value="NM_004776.4"/>
    <property type="RefSeq protein sequence ID" value="NP_004767.1"/>
</dbReference>
<dbReference type="UCSC" id="uc002xuu.5">
    <property type="organism name" value="human"/>
</dbReference>
<dbReference type="AGR" id="HGNC:928"/>
<dbReference type="CTD" id="9334"/>
<dbReference type="DisGeNET" id="9334"/>
<dbReference type="GeneCards" id="B4GALT5"/>
<dbReference type="HGNC" id="HGNC:928">
    <property type="gene designation" value="B4GALT5"/>
</dbReference>
<dbReference type="HPA" id="ENSG00000158470">
    <property type="expression patterns" value="Low tissue specificity"/>
</dbReference>
<dbReference type="MIM" id="604016">
    <property type="type" value="gene"/>
</dbReference>
<dbReference type="neXtProt" id="NX_O43286"/>
<dbReference type="OpenTargets" id="ENSG00000158470"/>
<dbReference type="PharmGKB" id="PA25227"/>
<dbReference type="VEuPathDB" id="HostDB:ENSG00000158470"/>
<dbReference type="eggNOG" id="KOG3916">
    <property type="taxonomic scope" value="Eukaryota"/>
</dbReference>
<dbReference type="GeneTree" id="ENSGT00940000158019"/>
<dbReference type="HOGENOM" id="CLU_044391_6_0_1"/>
<dbReference type="InParanoid" id="O43286"/>
<dbReference type="OMA" id="KDMDWDC"/>
<dbReference type="OrthoDB" id="10038994at2759"/>
<dbReference type="PAN-GO" id="O43286">
    <property type="GO annotations" value="4 GO annotations based on evolutionary models"/>
</dbReference>
<dbReference type="PhylomeDB" id="O43286"/>
<dbReference type="TreeFam" id="TF312834"/>
<dbReference type="BRENDA" id="2.4.1.274">
    <property type="organism ID" value="2681"/>
</dbReference>
<dbReference type="BRENDA" id="2.4.1.38">
    <property type="organism ID" value="2681"/>
</dbReference>
<dbReference type="BRENDA" id="2.4.1.90">
    <property type="organism ID" value="2681"/>
</dbReference>
<dbReference type="PathwayCommons" id="O43286"/>
<dbReference type="Reactome" id="R-HSA-2022854">
    <property type="pathway name" value="Keratan sulfate biosynthesis"/>
</dbReference>
<dbReference type="Reactome" id="R-HSA-913709">
    <property type="pathway name" value="O-linked glycosylation of mucins"/>
</dbReference>
<dbReference type="Reactome" id="R-HSA-975577">
    <property type="pathway name" value="N-Glycan antennae elongation"/>
</dbReference>
<dbReference type="Reactome" id="R-HSA-9840309">
    <property type="pathway name" value="Glycosphingolipid biosynthesis"/>
</dbReference>
<dbReference type="SignaLink" id="O43286"/>
<dbReference type="UniPathway" id="UPA00378"/>
<dbReference type="BioGRID-ORCS" id="9334">
    <property type="hits" value="26 hits in 1157 CRISPR screens"/>
</dbReference>
<dbReference type="ChiTaRS" id="B4GALT5">
    <property type="organism name" value="human"/>
</dbReference>
<dbReference type="GeneWiki" id="B4GALT5"/>
<dbReference type="GenomeRNAi" id="9334"/>
<dbReference type="Pharos" id="O43286">
    <property type="development level" value="Tbio"/>
</dbReference>
<dbReference type="PRO" id="PR:O43286"/>
<dbReference type="Proteomes" id="UP000005640">
    <property type="component" value="Chromosome 20"/>
</dbReference>
<dbReference type="RNAct" id="O43286">
    <property type="molecule type" value="protein"/>
</dbReference>
<dbReference type="Bgee" id="ENSG00000158470">
    <property type="expression patterns" value="Expressed in nasal cavity epithelium and 209 other cell types or tissues"/>
</dbReference>
<dbReference type="GO" id="GO:0005794">
    <property type="term" value="C:Golgi apparatus"/>
    <property type="evidence" value="ECO:0000318"/>
    <property type="project" value="GO_Central"/>
</dbReference>
<dbReference type="GO" id="GO:0032580">
    <property type="term" value="C:Golgi cisterna membrane"/>
    <property type="evidence" value="ECO:0007669"/>
    <property type="project" value="UniProtKB-SubCell"/>
</dbReference>
<dbReference type="GO" id="GO:0000139">
    <property type="term" value="C:Golgi membrane"/>
    <property type="evidence" value="ECO:0000304"/>
    <property type="project" value="Reactome"/>
</dbReference>
<dbReference type="GO" id="GO:0008378">
    <property type="term" value="F:galactosyltransferase activity"/>
    <property type="evidence" value="ECO:0000304"/>
    <property type="project" value="Reactome"/>
</dbReference>
<dbReference type="GO" id="GO:0046872">
    <property type="term" value="F:metal ion binding"/>
    <property type="evidence" value="ECO:0007669"/>
    <property type="project" value="UniProtKB-KW"/>
</dbReference>
<dbReference type="GO" id="GO:0003945">
    <property type="term" value="F:N-acetyllactosamine synthase activity"/>
    <property type="evidence" value="ECO:0007669"/>
    <property type="project" value="Ensembl"/>
</dbReference>
<dbReference type="GO" id="GO:0008489">
    <property type="term" value="F:UDP-galactose:glucosylceramide beta-1,4-galactosyltransferase activity"/>
    <property type="evidence" value="ECO:0000315"/>
    <property type="project" value="UniProtKB"/>
</dbReference>
<dbReference type="GO" id="GO:0005975">
    <property type="term" value="P:carbohydrate metabolic process"/>
    <property type="evidence" value="ECO:0007669"/>
    <property type="project" value="InterPro"/>
</dbReference>
<dbReference type="GO" id="GO:0022010">
    <property type="term" value="P:central nervous system myelination"/>
    <property type="evidence" value="ECO:0000250"/>
    <property type="project" value="UniProtKB"/>
</dbReference>
<dbReference type="GO" id="GO:0021955">
    <property type="term" value="P:central nervous system neuron axonogenesis"/>
    <property type="evidence" value="ECO:0000250"/>
    <property type="project" value="UniProtKB"/>
</dbReference>
<dbReference type="GO" id="GO:0010706">
    <property type="term" value="P:ganglioside biosynthetic process via lactosylceramide"/>
    <property type="evidence" value="ECO:0000250"/>
    <property type="project" value="UniProtKB"/>
</dbReference>
<dbReference type="GO" id="GO:0009101">
    <property type="term" value="P:glycoprotein biosynthetic process"/>
    <property type="evidence" value="ECO:0000318"/>
    <property type="project" value="GO_Central"/>
</dbReference>
<dbReference type="GO" id="GO:0070085">
    <property type="term" value="P:glycosylation"/>
    <property type="evidence" value="ECO:0000318"/>
    <property type="project" value="GO_Central"/>
</dbReference>
<dbReference type="GO" id="GO:0042551">
    <property type="term" value="P:neuron maturation"/>
    <property type="evidence" value="ECO:0000250"/>
    <property type="project" value="UniProtKB"/>
</dbReference>
<dbReference type="GO" id="GO:0016266">
    <property type="term" value="P:O-glycan processing"/>
    <property type="evidence" value="ECO:0000304"/>
    <property type="project" value="Reactome"/>
</dbReference>
<dbReference type="GO" id="GO:0030311">
    <property type="term" value="P:poly-N-acetyllactosamine biosynthetic process"/>
    <property type="evidence" value="ECO:0007669"/>
    <property type="project" value="Ensembl"/>
</dbReference>
<dbReference type="GO" id="GO:0040019">
    <property type="term" value="P:positive regulation of embryonic development"/>
    <property type="evidence" value="ECO:0000250"/>
    <property type="project" value="UniProtKB"/>
</dbReference>
<dbReference type="GO" id="GO:0006486">
    <property type="term" value="P:protein glycosylation"/>
    <property type="evidence" value="ECO:0000250"/>
    <property type="project" value="UniProtKB"/>
</dbReference>
<dbReference type="GO" id="GO:0031647">
    <property type="term" value="P:regulation of protein stability"/>
    <property type="evidence" value="ECO:0000250"/>
    <property type="project" value="UniProtKB"/>
</dbReference>
<dbReference type="CDD" id="cd00899">
    <property type="entry name" value="b4GalT"/>
    <property type="match status" value="1"/>
</dbReference>
<dbReference type="FunFam" id="3.90.550.10:FF:000037">
    <property type="entry name" value="Beta-1,4-galactosyltransferase 6"/>
    <property type="match status" value="1"/>
</dbReference>
<dbReference type="Gene3D" id="3.90.550.10">
    <property type="entry name" value="Spore Coat Polysaccharide Biosynthesis Protein SpsA, Chain A"/>
    <property type="match status" value="1"/>
</dbReference>
<dbReference type="InterPro" id="IPR003859">
    <property type="entry name" value="Galactosyl_T"/>
</dbReference>
<dbReference type="InterPro" id="IPR027791">
    <property type="entry name" value="Galactosyl_T_C"/>
</dbReference>
<dbReference type="InterPro" id="IPR027995">
    <property type="entry name" value="Galactosyl_T_N"/>
</dbReference>
<dbReference type="InterPro" id="IPR029044">
    <property type="entry name" value="Nucleotide-diphossugar_trans"/>
</dbReference>
<dbReference type="PANTHER" id="PTHR19300">
    <property type="entry name" value="BETA-1,4-GALACTOSYLTRANSFERASE"/>
    <property type="match status" value="1"/>
</dbReference>
<dbReference type="PANTHER" id="PTHR19300:SF45">
    <property type="entry name" value="BETA-1,4-GALACTOSYLTRANSFERASE 5"/>
    <property type="match status" value="1"/>
</dbReference>
<dbReference type="Pfam" id="PF02709">
    <property type="entry name" value="Glyco_transf_7C"/>
    <property type="match status" value="1"/>
</dbReference>
<dbReference type="Pfam" id="PF13733">
    <property type="entry name" value="Glyco_transf_7N"/>
    <property type="match status" value="1"/>
</dbReference>
<dbReference type="PRINTS" id="PR02050">
    <property type="entry name" value="B14GALTRFASE"/>
</dbReference>
<dbReference type="SUPFAM" id="SSF53448">
    <property type="entry name" value="Nucleotide-diphospho-sugar transferases"/>
    <property type="match status" value="1"/>
</dbReference>
<reference key="1">
    <citation type="journal article" date="1998" name="Proc. Natl. Acad. Sci. U.S.A.">
        <title>Molecular cloning of a human cDNA encoding beta-1,4-galactosyltransferase with 37% identity to mammalian UDP-Gal:GlcNAc beta-1,4-galactosyltransferase.</title>
        <authorList>
            <person name="Sato T."/>
            <person name="Furukawa K."/>
            <person name="Bakker H."/>
            <person name="van den Eijnden D.H."/>
            <person name="van Die I."/>
        </authorList>
    </citation>
    <scope>NUCLEOTIDE SEQUENCE [MRNA]</scope>
    <scope>TISSUE SPECIFICITY</scope>
    <source>
        <tissue>Mammary tumor</tissue>
    </source>
</reference>
<reference key="2">
    <citation type="journal article" date="1998" name="Glycobiology">
        <title>The expanding beta 4-galactosyltransferase gene family: messages from the databanks.</title>
        <authorList>
            <person name="Lo N.-W."/>
            <person name="Shaper J.H."/>
            <person name="Pevsner J."/>
            <person name="Shaper N.L."/>
        </authorList>
    </citation>
    <scope>NUCLEOTIDE SEQUENCE [MRNA]</scope>
</reference>
<reference key="3">
    <citation type="journal article" date="2001" name="Nature">
        <title>The DNA sequence and comparative analysis of human chromosome 20.</title>
        <authorList>
            <person name="Deloukas P."/>
            <person name="Matthews L.H."/>
            <person name="Ashurst J.L."/>
            <person name="Burton J."/>
            <person name="Gilbert J.G.R."/>
            <person name="Jones M."/>
            <person name="Stavrides G."/>
            <person name="Almeida J.P."/>
            <person name="Babbage A.K."/>
            <person name="Bagguley C.L."/>
            <person name="Bailey J."/>
            <person name="Barlow K.F."/>
            <person name="Bates K.N."/>
            <person name="Beard L.M."/>
            <person name="Beare D.M."/>
            <person name="Beasley O.P."/>
            <person name="Bird C.P."/>
            <person name="Blakey S.E."/>
            <person name="Bridgeman A.M."/>
            <person name="Brown A.J."/>
            <person name="Buck D."/>
            <person name="Burrill W.D."/>
            <person name="Butler A.P."/>
            <person name="Carder C."/>
            <person name="Carter N.P."/>
            <person name="Chapman J.C."/>
            <person name="Clamp M."/>
            <person name="Clark G."/>
            <person name="Clark L.N."/>
            <person name="Clark S.Y."/>
            <person name="Clee C.M."/>
            <person name="Clegg S."/>
            <person name="Cobley V.E."/>
            <person name="Collier R.E."/>
            <person name="Connor R.E."/>
            <person name="Corby N.R."/>
            <person name="Coulson A."/>
            <person name="Coville G.J."/>
            <person name="Deadman R."/>
            <person name="Dhami P.D."/>
            <person name="Dunn M."/>
            <person name="Ellington A.G."/>
            <person name="Frankland J.A."/>
            <person name="Fraser A."/>
            <person name="French L."/>
            <person name="Garner P."/>
            <person name="Grafham D.V."/>
            <person name="Griffiths C."/>
            <person name="Griffiths M.N.D."/>
            <person name="Gwilliam R."/>
            <person name="Hall R.E."/>
            <person name="Hammond S."/>
            <person name="Harley J.L."/>
            <person name="Heath P.D."/>
            <person name="Ho S."/>
            <person name="Holden J.L."/>
            <person name="Howden P.J."/>
            <person name="Huckle E."/>
            <person name="Hunt A.R."/>
            <person name="Hunt S.E."/>
            <person name="Jekosch K."/>
            <person name="Johnson C.M."/>
            <person name="Johnson D."/>
            <person name="Kay M.P."/>
            <person name="Kimberley A.M."/>
            <person name="King A."/>
            <person name="Knights A."/>
            <person name="Laird G.K."/>
            <person name="Lawlor S."/>
            <person name="Lehvaeslaiho M.H."/>
            <person name="Leversha M.A."/>
            <person name="Lloyd C."/>
            <person name="Lloyd D.M."/>
            <person name="Lovell J.D."/>
            <person name="Marsh V.L."/>
            <person name="Martin S.L."/>
            <person name="McConnachie L.J."/>
            <person name="McLay K."/>
            <person name="McMurray A.A."/>
            <person name="Milne S.A."/>
            <person name="Mistry D."/>
            <person name="Moore M.J.F."/>
            <person name="Mullikin J.C."/>
            <person name="Nickerson T."/>
            <person name="Oliver K."/>
            <person name="Parker A."/>
            <person name="Patel R."/>
            <person name="Pearce T.A.V."/>
            <person name="Peck A.I."/>
            <person name="Phillimore B.J.C.T."/>
            <person name="Prathalingam S.R."/>
            <person name="Plumb R.W."/>
            <person name="Ramsay H."/>
            <person name="Rice C.M."/>
            <person name="Ross M.T."/>
            <person name="Scott C.E."/>
            <person name="Sehra H.K."/>
            <person name="Shownkeen R."/>
            <person name="Sims S."/>
            <person name="Skuce C.D."/>
            <person name="Smith M.L."/>
            <person name="Soderlund C."/>
            <person name="Steward C.A."/>
            <person name="Sulston J.E."/>
            <person name="Swann R.M."/>
            <person name="Sycamore N."/>
            <person name="Taylor R."/>
            <person name="Tee L."/>
            <person name="Thomas D.W."/>
            <person name="Thorpe A."/>
            <person name="Tracey A."/>
            <person name="Tromans A.C."/>
            <person name="Vaudin M."/>
            <person name="Wall M."/>
            <person name="Wallis J.M."/>
            <person name="Whitehead S.L."/>
            <person name="Whittaker P."/>
            <person name="Willey D.L."/>
            <person name="Williams L."/>
            <person name="Williams S.A."/>
            <person name="Wilming L."/>
            <person name="Wray P.W."/>
            <person name="Hubbard T."/>
            <person name="Durbin R.M."/>
            <person name="Bentley D.R."/>
            <person name="Beck S."/>
            <person name="Rogers J."/>
        </authorList>
    </citation>
    <scope>NUCLEOTIDE SEQUENCE [LARGE SCALE GENOMIC DNA]</scope>
</reference>
<reference key="4">
    <citation type="submission" date="2005-09" db="EMBL/GenBank/DDBJ databases">
        <authorList>
            <person name="Mural R.J."/>
            <person name="Istrail S."/>
            <person name="Sutton G.G."/>
            <person name="Florea L."/>
            <person name="Halpern A.L."/>
            <person name="Mobarry C.M."/>
            <person name="Lippert R."/>
            <person name="Walenz B."/>
            <person name="Shatkay H."/>
            <person name="Dew I."/>
            <person name="Miller J.R."/>
            <person name="Flanigan M.J."/>
            <person name="Edwards N.J."/>
            <person name="Bolanos R."/>
            <person name="Fasulo D."/>
            <person name="Halldorsson B.V."/>
            <person name="Hannenhalli S."/>
            <person name="Turner R."/>
            <person name="Yooseph S."/>
            <person name="Lu F."/>
            <person name="Nusskern D.R."/>
            <person name="Shue B.C."/>
            <person name="Zheng X.H."/>
            <person name="Zhong F."/>
            <person name="Delcher A.L."/>
            <person name="Huson D.H."/>
            <person name="Kravitz S.A."/>
            <person name="Mouchard L."/>
            <person name="Reinert K."/>
            <person name="Remington K.A."/>
            <person name="Clark A.G."/>
            <person name="Waterman M.S."/>
            <person name="Eichler E.E."/>
            <person name="Adams M.D."/>
            <person name="Hunkapiller M.W."/>
            <person name="Myers E.W."/>
            <person name="Venter J.C."/>
        </authorList>
    </citation>
    <scope>NUCLEOTIDE SEQUENCE [LARGE SCALE GENOMIC DNA]</scope>
</reference>
<reference key="5">
    <citation type="journal article" date="2004" name="Genome Res.">
        <title>The status, quality, and expansion of the NIH full-length cDNA project: the Mammalian Gene Collection (MGC).</title>
        <authorList>
            <consortium name="The MGC Project Team"/>
        </authorList>
    </citation>
    <scope>NUCLEOTIDE SEQUENCE [LARGE SCALE MRNA]</scope>
    <source>
        <tissue>Cerebellum</tissue>
        <tissue>Lung</tissue>
    </source>
</reference>
<reference key="6">
    <citation type="journal article" date="2014" name="PLoS ONE">
        <title>Establishment of HeLa cell mutants deficient in sphingolipid-related genes using TALENs.</title>
        <authorList>
            <person name="Yamaji T."/>
            <person name="Hanada K."/>
        </authorList>
    </citation>
    <scope>NUCLEOTIDE SEQUENCE [MRNA] OF 4-382</scope>
    <scope>FUNCTION AS GLUCOSYLCERAMIDE BETA-1,4-GALACTOSYLTRANSFERASE</scope>
    <source>
        <tissue>Brain</tissue>
    </source>
</reference>
<reference key="7">
    <citation type="journal article" date="1999" name="Biochim. Biophys. Acta">
        <title>Identification and characterization of large galactosyltransferase gene families: galactosyltransferases for all functions.</title>
        <authorList>
            <person name="Amado M."/>
            <person name="Almeida R."/>
            <person name="Schwientek T."/>
            <person name="Clausen H."/>
        </authorList>
    </citation>
    <scope>REVIEW</scope>
</reference>
<reference key="8">
    <citation type="journal article" date="2018" name="Cell Death Dis.">
        <title>Downregulation of beta1,4-galactosyltransferase 5 improves insulin resistance by promoting adipocyte commitment and reducing inflammation.</title>
        <authorList>
            <person name="Li S.F."/>
            <person name="Zhu C.S."/>
            <person name="Wang Y.M."/>
            <person name="Xie X.X."/>
            <person name="Xiao L.L."/>
            <person name="Zhang Z.C."/>
            <person name="Tang Q.Q."/>
            <person name="Li X."/>
        </authorList>
    </citation>
    <scope>INDUCTION</scope>
</reference>
<protein>
    <recommendedName>
        <fullName>Beta-1,4-galactosyltransferase 5</fullName>
        <shortName>Beta-1,4-GalTase 5</shortName>
        <shortName>Beta4Gal-T5</shortName>
        <shortName>b4Gal-T5</shortName>
        <ecNumber>2.4.1.-</ecNumber>
    </recommendedName>
    <alternativeName>
        <fullName evidence="11">Beta-1,4-GalT II</fullName>
    </alternativeName>
    <alternativeName>
        <fullName>Glucosylceramide beta-1,4-galactosyltransferase</fullName>
        <ecNumber evidence="7">2.4.1.274</ecNumber>
    </alternativeName>
    <alternativeName>
        <fullName evidence="10">Lactosylceramide synthase</fullName>
        <shortName evidence="10">LacCer synthase</shortName>
    </alternativeName>
    <alternativeName>
        <fullName>UDP-Gal:beta-GlcNAc beta-1,4-galactosyltransferase 5</fullName>
    </alternativeName>
    <alternativeName>
        <fullName>UDP-galactose:beta-N-acetylglucosamine beta-1,4-galactosyltransferase 5</fullName>
    </alternativeName>
</protein>
<feature type="chain" id="PRO_0000080545" description="Beta-1,4-galactosyltransferase 5">
    <location>
        <begin position="1"/>
        <end position="388"/>
    </location>
</feature>
<feature type="topological domain" description="Cytoplasmic" evidence="6">
    <location>
        <begin position="1"/>
        <end position="14"/>
    </location>
</feature>
<feature type="transmembrane region" description="Helical; Signal-anchor for type II membrane protein" evidence="6">
    <location>
        <begin position="15"/>
        <end position="35"/>
    </location>
</feature>
<feature type="topological domain" description="Lumenal" evidence="6">
    <location>
        <begin position="36"/>
        <end position="388"/>
    </location>
</feature>
<feature type="binding site" evidence="4">
    <location>
        <begin position="169"/>
        <end position="173"/>
    </location>
    <ligand>
        <name>UDP-alpha-D-galactose</name>
        <dbReference type="ChEBI" id="CHEBI:66914"/>
    </ligand>
</feature>
<feature type="binding site" evidence="4">
    <location>
        <begin position="208"/>
        <end position="210"/>
    </location>
    <ligand>
        <name>UDP-alpha-D-galactose</name>
        <dbReference type="ChEBI" id="CHEBI:66914"/>
    </ligand>
</feature>
<feature type="binding site" evidence="4">
    <location>
        <begin position="235"/>
        <end position="236"/>
    </location>
    <ligand>
        <name>UDP-alpha-D-galactose</name>
        <dbReference type="ChEBI" id="CHEBI:66914"/>
    </ligand>
</feature>
<feature type="binding site" evidence="4">
    <location>
        <position position="236"/>
    </location>
    <ligand>
        <name>Mn(2+)</name>
        <dbReference type="ChEBI" id="CHEBI:29035"/>
    </ligand>
</feature>
<feature type="binding site" evidence="4">
    <location>
        <position position="264"/>
    </location>
    <ligand>
        <name>UDP-alpha-D-galactose</name>
        <dbReference type="ChEBI" id="CHEBI:66914"/>
    </ligand>
</feature>
<feature type="binding site" evidence="4">
    <location>
        <position position="296"/>
    </location>
    <ligand>
        <name>UDP-alpha-D-galactose</name>
        <dbReference type="ChEBI" id="CHEBI:66914"/>
    </ligand>
</feature>
<feature type="binding site" evidence="4">
    <location>
        <begin position="298"/>
        <end position="301"/>
    </location>
    <ligand>
        <name>N-acetyl-D-glucosamine</name>
        <dbReference type="ChEBI" id="CHEBI:506227"/>
    </ligand>
</feature>
<feature type="binding site" evidence="4">
    <location>
        <begin position="329"/>
        <end position="330"/>
    </location>
    <ligand>
        <name>UDP-alpha-D-galactose</name>
        <dbReference type="ChEBI" id="CHEBI:66914"/>
    </ligand>
</feature>
<feature type="binding site" evidence="4">
    <location>
        <position position="329"/>
    </location>
    <ligand>
        <name>Mn(2+)</name>
        <dbReference type="ChEBI" id="CHEBI:29035"/>
    </ligand>
</feature>
<feature type="binding site" evidence="4">
    <location>
        <position position="340"/>
    </location>
    <ligand>
        <name>N-acetyl-D-glucosamine</name>
        <dbReference type="ChEBI" id="CHEBI:506227"/>
    </ligand>
</feature>
<feature type="glycosylation site" description="N-linked (GlcNAc...) asparagine" evidence="6">
    <location>
        <position position="77"/>
    </location>
</feature>
<feature type="glycosylation site" description="N-linked (GlcNAc...) asparagine" evidence="6">
    <location>
        <position position="81"/>
    </location>
</feature>
<feature type="glycosylation site" description="N-linked (GlcNAc...) asparagine" evidence="6">
    <location>
        <position position="90"/>
    </location>
</feature>
<feature type="glycosylation site" description="N-linked (GlcNAc...) asparagine" evidence="6">
    <location>
        <position position="111"/>
    </location>
</feature>
<feature type="glycosylation site" description="N-linked (GlcNAc...) asparagine" evidence="6">
    <location>
        <position position="128"/>
    </location>
</feature>
<feature type="glycosylation site" description="N-linked (GlcNAc...) asparagine" evidence="6">
    <location>
        <position position="364"/>
    </location>
</feature>
<feature type="glycosylation site" description="N-linked (GlcNAc...) asparagine" evidence="6">
    <location>
        <position position="373"/>
    </location>
</feature>
<feature type="disulfide bond" evidence="2">
    <location>
        <begin position="114"/>
        <end position="158"/>
    </location>
</feature>
<feature type="disulfide bond" evidence="2">
    <location>
        <begin position="229"/>
        <end position="248"/>
    </location>
</feature>
<feature type="sequence variant" id="VAR_024468" description="In dbSNP:rs2273086.">
    <original>G</original>
    <variation>S</variation>
    <location>
        <position position="61"/>
    </location>
</feature>
<feature type="sequence variant" id="VAR_054022" description="In dbSNP:rs235035.">
    <original>D</original>
    <variation>N</variation>
    <location>
        <position position="368"/>
    </location>
</feature>
<feature type="sequence variant" id="VAR_033538" description="In dbSNP:rs35195217.">
    <original>Y</original>
    <variation>D</variation>
    <location>
        <position position="371"/>
    </location>
</feature>
<organism>
    <name type="scientific">Homo sapiens</name>
    <name type="common">Human</name>
    <dbReference type="NCBI Taxonomy" id="9606"/>
    <lineage>
        <taxon>Eukaryota</taxon>
        <taxon>Metazoa</taxon>
        <taxon>Chordata</taxon>
        <taxon>Craniata</taxon>
        <taxon>Vertebrata</taxon>
        <taxon>Euteleostomi</taxon>
        <taxon>Mammalia</taxon>
        <taxon>Eutheria</taxon>
        <taxon>Euarchontoglires</taxon>
        <taxon>Primates</taxon>
        <taxon>Haplorrhini</taxon>
        <taxon>Catarrhini</taxon>
        <taxon>Hominidae</taxon>
        <taxon>Homo</taxon>
    </lineage>
</organism>
<proteinExistence type="evidence at protein level"/>
<comment type="function">
    <text evidence="3 7">Catalyzes the synthesis of lactosylceramide (LacCer) via the transfer of galactose from UDP-galactose to glucosylceramide (GlcCer) (PubMed:24498430). LacCer is the starting point in the biosynthesis of all gangliosides (membrane-bound glycosphingolipids) which play pivotal roles in the CNS including neuronal maturation and axonal and myelin formation (By similarity). Plays a role in the glycosylation of BMPR1A and regulation of its protein stability (By similarity). Essential for extraembryonic development during early embryogenesis (By similarity).</text>
</comment>
<comment type="catalytic activity">
    <reaction evidence="7">
        <text>a beta-D-glucosyl-(1&lt;-&gt;1')-N-acylsphing-4-enine + UDP-alpha-D-galactose = a beta-D-Gal-(1-&gt;4)-beta-D-Glc-(1&lt;-&gt;1)-Cer(d18:1(4E)) + UDP + H(+)</text>
        <dbReference type="Rhea" id="RHEA:31495"/>
        <dbReference type="ChEBI" id="CHEBI:15378"/>
        <dbReference type="ChEBI" id="CHEBI:17950"/>
        <dbReference type="ChEBI" id="CHEBI:22801"/>
        <dbReference type="ChEBI" id="CHEBI:58223"/>
        <dbReference type="ChEBI" id="CHEBI:66914"/>
        <dbReference type="EC" id="2.4.1.274"/>
    </reaction>
    <physiologicalReaction direction="left-to-right" evidence="13">
        <dbReference type="Rhea" id="RHEA:31496"/>
    </physiologicalReaction>
</comment>
<comment type="cofactor">
    <cofactor evidence="5">
        <name>Mn(2+)</name>
        <dbReference type="ChEBI" id="CHEBI:29035"/>
    </cofactor>
</comment>
<comment type="pathway">
    <text>Protein modification; protein glycosylation.</text>
</comment>
<comment type="pathway">
    <text>Sphingolipid metabolism.</text>
</comment>
<comment type="interaction">
    <interactant intactId="EBI-21511746">
        <id>O43286</id>
    </interactant>
    <interactant intactId="EBI-750892">
        <id>P48723</id>
        <label>HSPA13</label>
    </interactant>
    <organismsDiffer>false</organismsDiffer>
    <experiments>2</experiments>
</comment>
<comment type="subcellular location">
    <subcellularLocation>
        <location evidence="2">Golgi apparatus</location>
        <location evidence="2">Golgi stack membrane</location>
        <topology>Single-pass type II membrane protein</topology>
    </subcellularLocation>
    <subcellularLocation>
        <location evidence="1">Golgi apparatus</location>
    </subcellularLocation>
    <text evidence="2">Trans cisternae of Golgi stack.</text>
</comment>
<comment type="tissue specificity">
    <text evidence="9">Ubiquitously expressed.</text>
</comment>
<comment type="induction">
    <text evidence="8">Up-regulated in subcutaneous adipose tissue during obesity and diabetes.</text>
</comment>
<comment type="similarity">
    <text evidence="12">Belongs to the glycosyltransferase 7 family.</text>
</comment>
<comment type="online information" name="Functional Glycomics Gateway - GTase">
    <link uri="http://www.functionalglycomics.org/glycomics/molecule/jsp/glycoEnzyme/viewGlycoEnzyme.jsp?gbpId=gt_hum_440"/>
    <text>Beta-1,4-galactosyltransferase 5</text>
</comment>
<gene>
    <name evidence="14" type="primary">B4GALT5</name>
</gene>
<sequence length="388" mass="45119">MRARRGLLRLPRRSLLAALFFFSLSSSLLYFVYVAPGIVNTYLFMMQAQGILIRDNVRTIGAQVYEQVLRSAYAKRNSSVNDSDYPLDLNHSETFLQTTTFLPEDFTYFANHTCPERLPSMKGPIDINMSEIGMDYIHELFSKDPTIKLGGHWKPSDCMPRWKVAILIPFRNRHEHLPVLFRHLLPMLQRQRLQFAFYVVEQVGTQPFNRAMLFNVGFQEAMKDLDWDCLIFHDVDHIPESDRNYYGCGQMPRHFATKLDKYMYLLPYTEFFGGVSGLTVEQFRKINGFPNAFWGWGGEDDDLWNRVQNAGYSVSRPEGDTGKYKSIPHHHRGEVQFLGRYALLRKSKERQGLDGLNNLNYFANITYDALYKNITVNLTPELAQVNEY</sequence>
<evidence type="ECO:0000250" key="1">
    <source>
        <dbReference type="UniProtKB" id="A0A1S6M251"/>
    </source>
</evidence>
<evidence type="ECO:0000250" key="2">
    <source>
        <dbReference type="UniProtKB" id="P15291"/>
    </source>
</evidence>
<evidence type="ECO:0000250" key="3">
    <source>
        <dbReference type="UniProtKB" id="Q9JMK0"/>
    </source>
</evidence>
<evidence type="ECO:0000250" key="4">
    <source>
        <dbReference type="UniProtKB" id="Q9UBV7"/>
    </source>
</evidence>
<evidence type="ECO:0000250" key="5">
    <source>
        <dbReference type="UniProtKB" id="Q9UBX8"/>
    </source>
</evidence>
<evidence type="ECO:0000255" key="6"/>
<evidence type="ECO:0000269" key="7">
    <source>
    </source>
</evidence>
<evidence type="ECO:0000269" key="8">
    <source>
    </source>
</evidence>
<evidence type="ECO:0000269" key="9">
    <source>
    </source>
</evidence>
<evidence type="ECO:0000303" key="10">
    <source>
    </source>
</evidence>
<evidence type="ECO:0000303" key="11">
    <source>
    </source>
</evidence>
<evidence type="ECO:0000305" key="12"/>
<evidence type="ECO:0000305" key="13">
    <source>
    </source>
</evidence>
<evidence type="ECO:0000312" key="14">
    <source>
        <dbReference type="HGNC" id="HGNC:928"/>
    </source>
</evidence>
<accession>O43286</accession>
<accession>E1P625</accession>
<accession>Q2M394</accession>
<accession>Q9UJQ8</accession>
<accession>U6C5D7</accession>
<name>B4GT5_HUMAN</name>
<keyword id="KW-1015">Disulfide bond</keyword>
<keyword id="KW-0325">Glycoprotein</keyword>
<keyword id="KW-0328">Glycosyltransferase</keyword>
<keyword id="KW-0333">Golgi apparatus</keyword>
<keyword id="KW-0444">Lipid biosynthesis</keyword>
<keyword id="KW-0443">Lipid metabolism</keyword>
<keyword id="KW-0464">Manganese</keyword>
<keyword id="KW-0472">Membrane</keyword>
<keyword id="KW-0479">Metal-binding</keyword>
<keyword id="KW-1267">Proteomics identification</keyword>
<keyword id="KW-1185">Reference proteome</keyword>
<keyword id="KW-0735">Signal-anchor</keyword>
<keyword id="KW-0746">Sphingolipid metabolism</keyword>
<keyword id="KW-0808">Transferase</keyword>
<keyword id="KW-0812">Transmembrane</keyword>
<keyword id="KW-1133">Transmembrane helix</keyword>